<organism>
    <name type="scientific">Acanthamoeba castellanii</name>
    <name type="common">Amoeba</name>
    <dbReference type="NCBI Taxonomy" id="5755"/>
    <lineage>
        <taxon>Eukaryota</taxon>
        <taxon>Amoebozoa</taxon>
        <taxon>Discosea</taxon>
        <taxon>Longamoebia</taxon>
        <taxon>Centramoebida</taxon>
        <taxon>Acanthamoebidae</taxon>
        <taxon>Acanthamoeba</taxon>
    </lineage>
</organism>
<evidence type="ECO:0000250" key="1">
    <source>
        <dbReference type="UniProtKB" id="Q8I4X0"/>
    </source>
</evidence>
<evidence type="ECO:0000305" key="2"/>
<evidence type="ECO:0007829" key="3">
    <source>
        <dbReference type="PDB" id="4EFH"/>
    </source>
</evidence>
<comment type="function">
    <text>Actins are highly conserved proteins that are involved in various types of cell motility and are ubiquitously expressed in all eukaryotic cells.</text>
</comment>
<comment type="catalytic activity">
    <reaction evidence="1">
        <text>ATP + H2O = ADP + phosphate + H(+)</text>
        <dbReference type="Rhea" id="RHEA:13065"/>
        <dbReference type="ChEBI" id="CHEBI:15377"/>
        <dbReference type="ChEBI" id="CHEBI:15378"/>
        <dbReference type="ChEBI" id="CHEBI:30616"/>
        <dbReference type="ChEBI" id="CHEBI:43474"/>
        <dbReference type="ChEBI" id="CHEBI:456216"/>
    </reaction>
</comment>
<comment type="subcellular location">
    <subcellularLocation>
        <location>Cytoplasm</location>
        <location>Cytoskeleton</location>
    </subcellularLocation>
</comment>
<comment type="PTM">
    <text>Met-1 may be removed after translation.</text>
</comment>
<comment type="miscellaneous">
    <text>There are at least three actin genes in A.castellanii.</text>
</comment>
<comment type="similarity">
    <text evidence="2">Belongs to the actin family.</text>
</comment>
<proteinExistence type="evidence at protein level"/>
<keyword id="KW-0002">3D-structure</keyword>
<keyword id="KW-0067">ATP-binding</keyword>
<keyword id="KW-0963">Cytoplasm</keyword>
<keyword id="KW-0206">Cytoskeleton</keyword>
<keyword id="KW-0378">Hydrolase</keyword>
<keyword id="KW-0547">Nucleotide-binding</keyword>
<feature type="chain" id="PRO_0000088884" description="Actin-1">
    <location>
        <begin position="1"/>
        <end position="375"/>
    </location>
</feature>
<feature type="strand" evidence="3">
    <location>
        <begin position="8"/>
        <end position="12"/>
    </location>
</feature>
<feature type="strand" evidence="3">
    <location>
        <begin position="14"/>
        <end position="21"/>
    </location>
</feature>
<feature type="strand" evidence="3">
    <location>
        <begin position="24"/>
        <end position="26"/>
    </location>
</feature>
<feature type="strand" evidence="3">
    <location>
        <begin position="28"/>
        <end position="33"/>
    </location>
</feature>
<feature type="strand" evidence="3">
    <location>
        <begin position="35"/>
        <end position="40"/>
    </location>
</feature>
<feature type="helix" evidence="3">
    <location>
        <begin position="56"/>
        <end position="60"/>
    </location>
</feature>
<feature type="turn" evidence="3">
    <location>
        <begin position="61"/>
        <end position="64"/>
    </location>
</feature>
<feature type="strand" evidence="3">
    <location>
        <begin position="65"/>
        <end position="68"/>
    </location>
</feature>
<feature type="turn" evidence="3">
    <location>
        <begin position="70"/>
        <end position="73"/>
    </location>
</feature>
<feature type="helix" evidence="3">
    <location>
        <begin position="79"/>
        <end position="91"/>
    </location>
</feature>
<feature type="turn" evidence="3">
    <location>
        <begin position="92"/>
        <end position="94"/>
    </location>
</feature>
<feature type="helix" evidence="3">
    <location>
        <begin position="98"/>
        <end position="100"/>
    </location>
</feature>
<feature type="strand" evidence="3">
    <location>
        <begin position="103"/>
        <end position="107"/>
    </location>
</feature>
<feature type="helix" evidence="3">
    <location>
        <begin position="113"/>
        <end position="125"/>
    </location>
</feature>
<feature type="strand" evidence="3">
    <location>
        <begin position="130"/>
        <end position="136"/>
    </location>
</feature>
<feature type="helix" evidence="3">
    <location>
        <begin position="137"/>
        <end position="144"/>
    </location>
</feature>
<feature type="strand" evidence="3">
    <location>
        <begin position="148"/>
        <end position="155"/>
    </location>
</feature>
<feature type="strand" evidence="3">
    <location>
        <begin position="160"/>
        <end position="166"/>
    </location>
</feature>
<feature type="helix" evidence="3">
    <location>
        <begin position="172"/>
        <end position="174"/>
    </location>
</feature>
<feature type="strand" evidence="3">
    <location>
        <begin position="176"/>
        <end position="179"/>
    </location>
</feature>
<feature type="helix" evidence="3">
    <location>
        <begin position="182"/>
        <end position="193"/>
    </location>
</feature>
<feature type="helix" evidence="3">
    <location>
        <begin position="194"/>
        <end position="196"/>
    </location>
</feature>
<feature type="helix" evidence="3">
    <location>
        <begin position="203"/>
        <end position="216"/>
    </location>
</feature>
<feature type="helix" evidence="3">
    <location>
        <begin position="223"/>
        <end position="232"/>
    </location>
</feature>
<feature type="strand" evidence="3">
    <location>
        <begin position="238"/>
        <end position="241"/>
    </location>
</feature>
<feature type="strand" evidence="3">
    <location>
        <begin position="247"/>
        <end position="250"/>
    </location>
</feature>
<feature type="helix" evidence="3">
    <location>
        <begin position="253"/>
        <end position="259"/>
    </location>
</feature>
<feature type="turn" evidence="3">
    <location>
        <begin position="260"/>
        <end position="262"/>
    </location>
</feature>
<feature type="helix" evidence="3">
    <location>
        <begin position="264"/>
        <end position="267"/>
    </location>
</feature>
<feature type="helix" evidence="3">
    <location>
        <begin position="274"/>
        <end position="283"/>
    </location>
</feature>
<feature type="helix" evidence="3">
    <location>
        <begin position="287"/>
        <end position="289"/>
    </location>
</feature>
<feature type="helix" evidence="3">
    <location>
        <begin position="290"/>
        <end position="294"/>
    </location>
</feature>
<feature type="strand" evidence="3">
    <location>
        <begin position="297"/>
        <end position="301"/>
    </location>
</feature>
<feature type="helix" evidence="3">
    <location>
        <begin position="302"/>
        <end position="305"/>
    </location>
</feature>
<feature type="helix" evidence="3">
    <location>
        <begin position="309"/>
        <end position="320"/>
    </location>
</feature>
<feature type="turn" evidence="3">
    <location>
        <begin position="333"/>
        <end position="336"/>
    </location>
</feature>
<feature type="helix" evidence="3">
    <location>
        <begin position="338"/>
        <end position="347"/>
    </location>
</feature>
<feature type="turn" evidence="3">
    <location>
        <begin position="350"/>
        <end position="355"/>
    </location>
</feature>
<feature type="strand" evidence="3">
    <location>
        <begin position="356"/>
        <end position="358"/>
    </location>
</feature>
<feature type="helix" evidence="3">
    <location>
        <begin position="359"/>
        <end position="365"/>
    </location>
</feature>
<feature type="helix" evidence="3">
    <location>
        <begin position="369"/>
        <end position="373"/>
    </location>
</feature>
<dbReference type="EC" id="3.6.4.-" evidence="1"/>
<dbReference type="EMBL" id="V00002">
    <property type="protein sequence ID" value="CAA23399.1"/>
    <property type="molecule type" value="Genomic_DNA"/>
</dbReference>
<dbReference type="PIR" id="A92886">
    <property type="entry name" value="ATAX"/>
</dbReference>
<dbReference type="PDB" id="4EFH">
    <property type="method" value="X-ray"/>
    <property type="resolution" value="2.48 A"/>
    <property type="chains" value="A=1-375"/>
</dbReference>
<dbReference type="PDBsum" id="4EFH"/>
<dbReference type="SMR" id="P02578"/>
<dbReference type="ELM" id="P02578"/>
<dbReference type="VEuPathDB" id="AmoebaDB:ACA1_361250"/>
<dbReference type="OMA" id="TANASRW"/>
<dbReference type="EvolutionaryTrace" id="P02578"/>
<dbReference type="GO" id="GO:0015629">
    <property type="term" value="C:actin cytoskeleton"/>
    <property type="evidence" value="ECO:0007669"/>
    <property type="project" value="UniProtKB-ARBA"/>
</dbReference>
<dbReference type="GO" id="GO:0005737">
    <property type="term" value="C:cytoplasm"/>
    <property type="evidence" value="ECO:0007669"/>
    <property type="project" value="UniProtKB-KW"/>
</dbReference>
<dbReference type="GO" id="GO:0005524">
    <property type="term" value="F:ATP binding"/>
    <property type="evidence" value="ECO:0007669"/>
    <property type="project" value="UniProtKB-KW"/>
</dbReference>
<dbReference type="GO" id="GO:0016787">
    <property type="term" value="F:hydrolase activity"/>
    <property type="evidence" value="ECO:0007669"/>
    <property type="project" value="UniProtKB-KW"/>
</dbReference>
<dbReference type="GO" id="GO:0006909">
    <property type="term" value="P:phagocytosis"/>
    <property type="evidence" value="ECO:0007669"/>
    <property type="project" value="UniProtKB-ARBA"/>
</dbReference>
<dbReference type="CDD" id="cd10224">
    <property type="entry name" value="ASKHA_NBD_actin"/>
    <property type="match status" value="1"/>
</dbReference>
<dbReference type="FunFam" id="2.30.36.70:FF:000001">
    <property type="entry name" value="Actin, alpha skeletal muscle"/>
    <property type="match status" value="1"/>
</dbReference>
<dbReference type="FunFam" id="3.30.420.40:FF:000131">
    <property type="entry name" value="Actin, alpha skeletal muscle"/>
    <property type="match status" value="1"/>
</dbReference>
<dbReference type="FunFam" id="3.30.420.40:FF:000291">
    <property type="entry name" value="Actin, alpha skeletal muscle"/>
    <property type="match status" value="1"/>
</dbReference>
<dbReference type="FunFam" id="3.90.640.10:FF:000047">
    <property type="entry name" value="Actin, alpha skeletal muscle"/>
    <property type="match status" value="1"/>
</dbReference>
<dbReference type="FunFam" id="3.30.420.40:FF:000058">
    <property type="entry name" value="Putative actin-related protein 5"/>
    <property type="match status" value="1"/>
</dbReference>
<dbReference type="Gene3D" id="3.30.420.40">
    <property type="match status" value="2"/>
</dbReference>
<dbReference type="Gene3D" id="3.90.640.10">
    <property type="entry name" value="Actin, Chain A, domain 4"/>
    <property type="match status" value="1"/>
</dbReference>
<dbReference type="InterPro" id="IPR004000">
    <property type="entry name" value="Actin"/>
</dbReference>
<dbReference type="InterPro" id="IPR020902">
    <property type="entry name" value="Actin/actin-like_CS"/>
</dbReference>
<dbReference type="InterPro" id="IPR004001">
    <property type="entry name" value="Actin_CS"/>
</dbReference>
<dbReference type="InterPro" id="IPR043129">
    <property type="entry name" value="ATPase_NBD"/>
</dbReference>
<dbReference type="PANTHER" id="PTHR11937">
    <property type="entry name" value="ACTIN"/>
    <property type="match status" value="1"/>
</dbReference>
<dbReference type="Pfam" id="PF00022">
    <property type="entry name" value="Actin"/>
    <property type="match status" value="1"/>
</dbReference>
<dbReference type="PRINTS" id="PR00190">
    <property type="entry name" value="ACTIN"/>
</dbReference>
<dbReference type="SMART" id="SM00268">
    <property type="entry name" value="ACTIN"/>
    <property type="match status" value="1"/>
</dbReference>
<dbReference type="SUPFAM" id="SSF53067">
    <property type="entry name" value="Actin-like ATPase domain"/>
    <property type="match status" value="2"/>
</dbReference>
<dbReference type="PROSITE" id="PS00406">
    <property type="entry name" value="ACTINS_1"/>
    <property type="match status" value="1"/>
</dbReference>
<dbReference type="PROSITE" id="PS00432">
    <property type="entry name" value="ACTINS_2"/>
    <property type="match status" value="1"/>
</dbReference>
<dbReference type="PROSITE" id="PS01132">
    <property type="entry name" value="ACTINS_ACT_LIKE"/>
    <property type="match status" value="1"/>
</dbReference>
<accession>P02578</accession>
<sequence>MGDEVQALVIDNGSGMCKAGFAGDDAPRAVFPSIVGRPRHTGVMVGMGQKDSYVGDEAQSKRGILTLKYPIEHGIVTNWDDMEKIWHHTFYNELRVAPEEHPVLLTEAPLNPKANREKMTQIMFETFNTPAMYVAIQAVLSLYASGRTTGIVLDSGDGVTHTVPIYEGYALPHAILRLDLAGRDLTDYLMKILTERGYSFTTTAEREIVRDIKEKLCYVALDFEQEMHTAASSSALEKSYELPDGQVITIGNERFRAPEALFQPSFLGMESAGIHETTYNSIMKCDVDIRKDLYGNVVLSGGTTMFPGIADRMQKELTALAPSTMKIKIIAPPERKYSVWIGGSILASLSTFQQMWISKEEYDESGPSIVHRKCF</sequence>
<protein>
    <recommendedName>
        <fullName>Actin-1</fullName>
        <ecNumber evidence="1">3.6.4.-</ecNumber>
    </recommendedName>
</protein>
<name>ACT1_ACACA</name>
<reference key="1">
    <citation type="journal article" date="1982" name="J. Mol. Biol.">
        <title>Actin genes and actin messenger RNA in Acanthamoeba castellanii. Nucleotide sequence of the split actin gene I.</title>
        <authorList>
            <person name="Nellen W."/>
            <person name="Gallwitz D."/>
        </authorList>
    </citation>
    <scope>NUCLEOTIDE SEQUENCE [GENOMIC DNA]</scope>
</reference>